<reference key="1">
    <citation type="journal article" date="1988" name="J. Mol. Biol.">
        <title>Evidence for gene conversion between the phosphoglycerate kinase genes of Trypanosoma brucei.</title>
        <authorList>
            <person name="le Blancq S.M."/>
            <person name="Swinkels B.W."/>
            <person name="Gibson W.C."/>
            <person name="Borst P."/>
        </authorList>
    </citation>
    <scope>NUCLEOTIDE SEQUENCE [GENOMIC DNA] (ALLELES 2 AND 4)</scope>
</reference>
<reference key="2">
    <citation type="journal article" date="1985" name="EMBO J.">
        <title>Topogenesis of microbody enzymes: a sequence comparison of the genes for the glycosomal (microbody) and cytosolic phosphoglycerate kinases of Trypanosoma brucei.</title>
        <authorList>
            <person name="Osinga K.A."/>
            <person name="Swinkels B.W."/>
            <person name="Gibson W.C."/>
            <person name="Borst P."/>
            <person name="Veeneman G.H."/>
            <person name="van Boom J.H."/>
            <person name="Michels P.A.M."/>
            <person name="Opperdoes F.R."/>
        </authorList>
    </citation>
    <scope>NUCLEOTIDE SEQUENCE [GENOMIC DNA]</scope>
</reference>
<reference evidence="6" key="3">
    <citation type="journal article" date="1997" name="Nature">
        <title>Synergistic effects of substrate-induced conformational changes in phosphoglycerate kinase activation.</title>
        <authorList>
            <person name="Bernstein B.E."/>
            <person name="Michels P.A.M."/>
            <person name="Hol W.G.J."/>
        </authorList>
    </citation>
    <scope>X-RAY CRYSTALLOGRAPHY (2.50 ANGSTROMS) OF 5-417 IN COMPLEX WITH ATP AND SUBSTRATE</scope>
    <scope>COFACTOR</scope>
</reference>
<reference evidence="7" key="4">
    <citation type="journal article" date="1998" name="J. Mol. Biol.">
        <title>A bisubstrate analog induces unexpected conformational changes in phosphoglycerate kinase from Trypanosoma brucei.</title>
        <authorList>
            <person name="Bernstein B.E."/>
            <person name="Williams D.M."/>
            <person name="Bressi J.C."/>
            <person name="Kuhn P."/>
            <person name="Gelb M.H."/>
            <person name="Blackburn G.M."/>
            <person name="Hol W.G.J."/>
        </authorList>
    </citation>
    <scope>X-RAY CRYSTALLOGRAPHY (1.6 ANGSTROMS) OF 5-419 IN COMPLEX WITH ADP AND SUBSTRATE</scope>
</reference>
<protein>
    <recommendedName>
        <fullName>Phosphoglycerate kinase, glycosomal</fullName>
        <shortName>Phosphoglycerate kinase C</shortName>
        <ecNumber evidence="1">2.7.2.3</ecNumber>
    </recommendedName>
</protein>
<feature type="chain" id="PRO_0000145866" description="Phosphoglycerate kinase, glycosomal">
    <location>
        <begin position="1"/>
        <end position="440"/>
    </location>
</feature>
<feature type="binding site" evidence="1">
    <location>
        <position position="23"/>
    </location>
    <ligand>
        <name>(2R)-3-phosphoglycerate</name>
        <dbReference type="ChEBI" id="CHEBI:58272"/>
    </ligand>
</feature>
<feature type="binding site" evidence="3 6">
    <location>
        <position position="24"/>
    </location>
    <ligand>
        <name>(2R)-3-phosphoglycerate</name>
        <dbReference type="ChEBI" id="CHEBI:58272"/>
    </ligand>
</feature>
<feature type="binding site" evidence="1">
    <location>
        <position position="25"/>
    </location>
    <ligand>
        <name>(2R)-3-phosphoglycerate</name>
        <dbReference type="ChEBI" id="CHEBI:58272"/>
    </ligand>
</feature>
<feature type="binding site" evidence="3 6">
    <location>
        <position position="26"/>
    </location>
    <ligand>
        <name>(2R)-3-phosphoglycerate</name>
        <dbReference type="ChEBI" id="CHEBI:58272"/>
    </ligand>
</feature>
<feature type="binding site" evidence="3 4 6">
    <location>
        <position position="39"/>
    </location>
    <ligand>
        <name>(2R)-3-phosphoglycerate</name>
        <dbReference type="ChEBI" id="CHEBI:58272"/>
    </ligand>
</feature>
<feature type="binding site" evidence="1">
    <location>
        <position position="61"/>
    </location>
    <ligand>
        <name>(2R)-3-phosphoglycerate</name>
        <dbReference type="ChEBI" id="CHEBI:58272"/>
    </ligand>
</feature>
<feature type="binding site" evidence="3 6">
    <location>
        <position position="62"/>
    </location>
    <ligand>
        <name>(2R)-3-phosphoglycerate</name>
        <dbReference type="ChEBI" id="CHEBI:58272"/>
    </ligand>
</feature>
<feature type="binding site" evidence="1">
    <location>
        <position position="64"/>
    </location>
    <ligand>
        <name>(2R)-3-phosphoglycerate</name>
        <dbReference type="ChEBI" id="CHEBI:58272"/>
    </ligand>
</feature>
<feature type="binding site" evidence="3 6">
    <location>
        <position position="65"/>
    </location>
    <ligand>
        <name>(2R)-3-phosphoglycerate</name>
        <dbReference type="ChEBI" id="CHEBI:58272"/>
    </ligand>
</feature>
<feature type="binding site" evidence="3 4 6">
    <location>
        <position position="135"/>
    </location>
    <ligand>
        <name>(2R)-3-phosphoglycerate</name>
        <dbReference type="ChEBI" id="CHEBI:58272"/>
    </ligand>
</feature>
<feature type="binding site" evidence="1">
    <location>
        <position position="171"/>
    </location>
    <ligand>
        <name>(2R)-3-phosphoglycerate</name>
        <dbReference type="ChEBI" id="CHEBI:58272"/>
    </ligand>
</feature>
<feature type="binding site" evidence="3 4 6">
    <location>
        <position position="172"/>
    </location>
    <ligand>
        <name>(2R)-3-phosphoglycerate</name>
        <dbReference type="ChEBI" id="CHEBI:58272"/>
    </ligand>
</feature>
<feature type="binding site" evidence="1">
    <location>
        <position position="217"/>
    </location>
    <ligand>
        <name>CDP</name>
        <dbReference type="ChEBI" id="CHEBI:58069"/>
    </ligand>
</feature>
<feature type="binding site" evidence="3 6">
    <location>
        <position position="218"/>
    </location>
    <ligand>
        <name>ADP</name>
        <dbReference type="ChEBI" id="CHEBI:456216"/>
    </ligand>
</feature>
<feature type="binding site" evidence="2">
    <location>
        <position position="218"/>
    </location>
    <ligand>
        <name>AMP</name>
        <dbReference type="ChEBI" id="CHEBI:456215"/>
    </ligand>
</feature>
<feature type="binding site" evidence="2">
    <location>
        <position position="218"/>
    </location>
    <ligand>
        <name>ATP</name>
        <dbReference type="ChEBI" id="CHEBI:30616"/>
    </ligand>
</feature>
<feature type="binding site" evidence="1">
    <location>
        <position position="218"/>
    </location>
    <ligand>
        <name>Mg(2+)</name>
        <dbReference type="ChEBI" id="CHEBI:18420"/>
    </ligand>
</feature>
<feature type="binding site" evidence="3 6">
    <location>
        <position position="219"/>
    </location>
    <ligand>
        <name>(2R)-3-phosphoglycerate</name>
        <dbReference type="ChEBI" id="CHEBI:58272"/>
    </ligand>
</feature>
<feature type="binding site" evidence="2">
    <location>
        <position position="219"/>
    </location>
    <ligand>
        <name>AMP</name>
        <dbReference type="ChEBI" id="CHEBI:456215"/>
    </ligand>
</feature>
<feature type="binding site" evidence="1">
    <location>
        <position position="222"/>
    </location>
    <ligand>
        <name>CDP</name>
        <dbReference type="ChEBI" id="CHEBI:58069"/>
    </ligand>
</feature>
<feature type="binding site" evidence="1">
    <location>
        <position position="222"/>
    </location>
    <ligand>
        <name>Mg(2+)</name>
        <dbReference type="ChEBI" id="CHEBI:18420"/>
    </ligand>
</feature>
<feature type="binding site" evidence="3 6">
    <location>
        <position position="223"/>
    </location>
    <ligand>
        <name>ADP</name>
        <dbReference type="ChEBI" id="CHEBI:456216"/>
    </ligand>
</feature>
<feature type="binding site" evidence="2">
    <location>
        <position position="223"/>
    </location>
    <ligand>
        <name>AMP</name>
        <dbReference type="ChEBI" id="CHEBI:456215"/>
    </ligand>
</feature>
<feature type="binding site" evidence="1">
    <location>
        <position position="241"/>
    </location>
    <ligand>
        <name>ADP</name>
        <dbReference type="ChEBI" id="CHEBI:456216"/>
    </ligand>
</feature>
<feature type="binding site" evidence="1">
    <location>
        <position position="241"/>
    </location>
    <ligand>
        <name>CDP</name>
        <dbReference type="ChEBI" id="CHEBI:58069"/>
    </ligand>
</feature>
<feature type="binding site" evidence="2">
    <location>
        <position position="242"/>
    </location>
    <ligand>
        <name>AMP</name>
        <dbReference type="ChEBI" id="CHEBI:456215"/>
    </ligand>
</feature>
<feature type="binding site" evidence="2">
    <location>
        <position position="242"/>
    </location>
    <ligand>
        <name>ATP</name>
        <dbReference type="ChEBI" id="CHEBI:30616"/>
    </ligand>
</feature>
<feature type="binding site" evidence="3 6">
    <location>
        <position position="314"/>
    </location>
    <ligand>
        <name>ADP</name>
        <dbReference type="ChEBI" id="CHEBI:456216"/>
    </ligand>
</feature>
<feature type="binding site" evidence="2">
    <location>
        <position position="314"/>
    </location>
    <ligand>
        <name>AMP</name>
        <dbReference type="ChEBI" id="CHEBI:456215"/>
    </ligand>
</feature>
<feature type="binding site" evidence="2">
    <location>
        <position position="314"/>
    </location>
    <ligand>
        <name>ATP</name>
        <dbReference type="ChEBI" id="CHEBI:30616"/>
    </ligand>
</feature>
<feature type="binding site" evidence="3 6">
    <location>
        <position position="338"/>
    </location>
    <ligand>
        <name>ADP</name>
        <dbReference type="ChEBI" id="CHEBI:456216"/>
    </ligand>
</feature>
<feature type="binding site" evidence="1">
    <location>
        <position position="339"/>
    </location>
    <ligand>
        <name>CDP</name>
        <dbReference type="ChEBI" id="CHEBI:58069"/>
    </ligand>
</feature>
<feature type="binding site" evidence="1">
    <location>
        <position position="344"/>
    </location>
    <ligand>
        <name>ADP</name>
        <dbReference type="ChEBI" id="CHEBI:456216"/>
    </ligand>
</feature>
<feature type="binding site" evidence="1">
    <location>
        <position position="344"/>
    </location>
    <ligand>
        <name>CDP</name>
        <dbReference type="ChEBI" id="CHEBI:58069"/>
    </ligand>
</feature>
<feature type="binding site" evidence="3 6">
    <location>
        <position position="345"/>
    </location>
    <ligand>
        <name>ADP</name>
        <dbReference type="ChEBI" id="CHEBI:456216"/>
    </ligand>
</feature>
<feature type="binding site" evidence="2">
    <location>
        <position position="345"/>
    </location>
    <ligand>
        <name>AMP</name>
        <dbReference type="ChEBI" id="CHEBI:456215"/>
    </ligand>
</feature>
<feature type="binding site" evidence="3 6">
    <location>
        <position position="377"/>
    </location>
    <ligand>
        <name>ADP</name>
        <dbReference type="ChEBI" id="CHEBI:456216"/>
    </ligand>
</feature>
<feature type="binding site" evidence="2">
    <location>
        <position position="377"/>
    </location>
    <ligand>
        <name>ATP</name>
        <dbReference type="ChEBI" id="CHEBI:30616"/>
    </ligand>
</feature>
<feature type="binding site" evidence="3 6">
    <location>
        <position position="377"/>
    </location>
    <ligand>
        <name>Mg(2+)</name>
        <dbReference type="ChEBI" id="CHEBI:18420"/>
    </ligand>
</feature>
<feature type="binding site" evidence="3 6">
    <location>
        <position position="378"/>
    </location>
    <ligand>
        <name>ADP</name>
        <dbReference type="ChEBI" id="CHEBI:456216"/>
    </ligand>
</feature>
<feature type="binding site" evidence="2">
    <location>
        <position position="378"/>
    </location>
    <ligand>
        <name>ATP</name>
        <dbReference type="ChEBI" id="CHEBI:30616"/>
    </ligand>
</feature>
<feature type="sequence variant" description="In allele 4.">
    <original>G</original>
    <variation>D</variation>
    <location>
        <position position="75"/>
    </location>
</feature>
<feature type="helix" evidence="8">
    <location>
        <begin position="9"/>
        <end position="11"/>
    </location>
</feature>
<feature type="strand" evidence="8">
    <location>
        <begin position="18"/>
        <end position="23"/>
    </location>
</feature>
<feature type="strand" evidence="8">
    <location>
        <begin position="33"/>
        <end position="35"/>
    </location>
</feature>
<feature type="helix" evidence="8">
    <location>
        <begin position="38"/>
        <end position="52"/>
    </location>
</feature>
<feature type="strand" evidence="8">
    <location>
        <begin position="56"/>
        <end position="60"/>
    </location>
</feature>
<feature type="helix" evidence="8">
    <location>
        <begin position="71"/>
        <end position="73"/>
    </location>
</feature>
<feature type="helix" evidence="8">
    <location>
        <begin position="74"/>
        <end position="79"/>
    </location>
</feature>
<feature type="helix" evidence="8">
    <location>
        <begin position="88"/>
        <end position="90"/>
    </location>
</feature>
<feature type="helix" evidence="8">
    <location>
        <begin position="93"/>
        <end position="103"/>
    </location>
</feature>
<feature type="strand" evidence="8">
    <location>
        <begin position="108"/>
        <end position="111"/>
    </location>
</feature>
<feature type="helix" evidence="8">
    <location>
        <begin position="117"/>
        <end position="121"/>
    </location>
</feature>
<feature type="strand" evidence="8">
    <location>
        <begin position="128"/>
        <end position="131"/>
    </location>
</feature>
<feature type="helix" evidence="8">
    <location>
        <begin position="134"/>
        <end position="136"/>
    </location>
</feature>
<feature type="helix" evidence="8">
    <location>
        <begin position="138"/>
        <end position="141"/>
    </location>
</feature>
<feature type="helix" evidence="8">
    <location>
        <begin position="145"/>
        <end position="156"/>
    </location>
</feature>
<feature type="strand" evidence="8">
    <location>
        <begin position="160"/>
        <end position="165"/>
    </location>
</feature>
<feature type="helix" evidence="8">
    <location>
        <begin position="167"/>
        <end position="169"/>
    </location>
</feature>
<feature type="turn" evidence="8">
    <location>
        <begin position="175"/>
        <end position="178"/>
    </location>
</feature>
<feature type="helix" evidence="8">
    <location>
        <begin position="179"/>
        <end position="184"/>
    </location>
</feature>
<feature type="helix" evidence="8">
    <location>
        <begin position="191"/>
        <end position="204"/>
    </location>
</feature>
<feature type="strand" evidence="8">
    <location>
        <begin position="209"/>
        <end position="215"/>
    </location>
</feature>
<feature type="helix" evidence="8">
    <location>
        <begin position="221"/>
        <end position="223"/>
    </location>
</feature>
<feature type="helix" evidence="8">
    <location>
        <begin position="224"/>
        <end position="230"/>
    </location>
</feature>
<feature type="helix" evidence="8">
    <location>
        <begin position="231"/>
        <end position="233"/>
    </location>
</feature>
<feature type="strand" evidence="8">
    <location>
        <begin position="235"/>
        <end position="239"/>
    </location>
</feature>
<feature type="helix" evidence="8">
    <location>
        <begin position="243"/>
        <end position="251"/>
    </location>
</feature>
<feature type="helix" evidence="8">
    <location>
        <begin position="262"/>
        <end position="264"/>
    </location>
</feature>
<feature type="helix" evidence="8">
    <location>
        <begin position="265"/>
        <end position="277"/>
    </location>
</feature>
<feature type="strand" evidence="8">
    <location>
        <begin position="281"/>
        <end position="283"/>
    </location>
</feature>
<feature type="strand" evidence="8">
    <location>
        <begin position="286"/>
        <end position="295"/>
    </location>
</feature>
<feature type="strand" evidence="8">
    <location>
        <begin position="304"/>
        <end position="306"/>
    </location>
</feature>
<feature type="strand" evidence="8">
    <location>
        <begin position="313"/>
        <end position="317"/>
    </location>
</feature>
<feature type="helix" evidence="8">
    <location>
        <begin position="319"/>
        <end position="329"/>
    </location>
</feature>
<feature type="strand" evidence="8">
    <location>
        <begin position="333"/>
        <end position="339"/>
    </location>
</feature>
<feature type="helix" evidence="8">
    <location>
        <begin position="347"/>
        <end position="349"/>
    </location>
</feature>
<feature type="helix" evidence="8">
    <location>
        <begin position="351"/>
        <end position="367"/>
    </location>
</feature>
<feature type="strand" evidence="8">
    <location>
        <begin position="370"/>
        <end position="373"/>
    </location>
</feature>
<feature type="helix" evidence="8">
    <location>
        <begin position="376"/>
        <end position="384"/>
    </location>
</feature>
<feature type="turn" evidence="8">
    <location>
        <begin position="388"/>
        <end position="390"/>
    </location>
</feature>
<feature type="strand" evidence="8">
    <location>
        <begin position="391"/>
        <end position="394"/>
    </location>
</feature>
<feature type="helix" evidence="8">
    <location>
        <begin position="398"/>
        <end position="405"/>
    </location>
</feature>
<feature type="helix" evidence="8">
    <location>
        <begin position="411"/>
        <end position="414"/>
    </location>
</feature>
<accession>P07378</accession>
<name>PGKC_TRYBB</name>
<evidence type="ECO:0000250" key="1">
    <source>
        <dbReference type="UniProtKB" id="P00558"/>
    </source>
</evidence>
<evidence type="ECO:0000250" key="2">
    <source>
        <dbReference type="UniProtKB" id="Q7SIB7"/>
    </source>
</evidence>
<evidence type="ECO:0000269" key="3">
    <source>
    </source>
</evidence>
<evidence type="ECO:0000269" key="4">
    <source>
    </source>
</evidence>
<evidence type="ECO:0000305" key="5"/>
<evidence type="ECO:0007744" key="6">
    <source>
        <dbReference type="PDB" id="13PK"/>
    </source>
</evidence>
<evidence type="ECO:0007744" key="7">
    <source>
        <dbReference type="PDB" id="16PK"/>
    </source>
</evidence>
<evidence type="ECO:0007829" key="8">
    <source>
        <dbReference type="PDB" id="16PK"/>
    </source>
</evidence>
<sequence>MTLNEKKSINECDLKGKKVLIRVDFNVPVKNGKITNDYRIRSALPTLKKVLTEGGSCVLMSHLGRPKGIPMAQAGKIRSTGGVPGFQQKATLKPVAKALSELLLRPVTFAPDCLNAADVVSKMSPGDVVLLENVRFYKEEGSKKAKDREAMAKILASYGDVYISDAFGTAHRDSATMTGIPKILGNGAAGYLMEKEISYFAKVLGNPPRPLVAIVGGAKVSDKIQLLDNMLQRIDYLLIGGAMAYTFLKAQGYSIGKSKCEESKLEFARSLLKKAEDRKVQVILPIDHVCHTEFKAVDSPLITEDQNIPEGHMALDIGPKTIEKYVQTIGKCKSAIWNGPMGVFEMVPYSKGTFAIAKAMGRGTHEHGLMSIIGGGDSASAAELSGEAKRMSHVSTGGGASLELLEGKTLPGVTVLDEKSAVVSYASAGTGTLSNRWSSL</sequence>
<organism>
    <name type="scientific">Trypanosoma brucei brucei</name>
    <dbReference type="NCBI Taxonomy" id="5702"/>
    <lineage>
        <taxon>Eukaryota</taxon>
        <taxon>Discoba</taxon>
        <taxon>Euglenozoa</taxon>
        <taxon>Kinetoplastea</taxon>
        <taxon>Metakinetoplastina</taxon>
        <taxon>Trypanosomatida</taxon>
        <taxon>Trypanosomatidae</taxon>
        <taxon>Trypanosoma</taxon>
    </lineage>
</organism>
<proteinExistence type="evidence at protein level"/>
<dbReference type="EC" id="2.7.2.3" evidence="1"/>
<dbReference type="EMBL" id="X03370">
    <property type="protein sequence ID" value="CAA27069.1"/>
    <property type="molecule type" value="Genomic_DNA"/>
</dbReference>
<dbReference type="EMBL" id="X05889">
    <property type="protein sequence ID" value="CAA29318.1"/>
    <property type="molecule type" value="Genomic_DNA"/>
</dbReference>
<dbReference type="EMBL" id="X05890">
    <property type="protein sequence ID" value="CAA29321.1"/>
    <property type="molecule type" value="Genomic_DNA"/>
</dbReference>
<dbReference type="PIR" id="B25119">
    <property type="entry name" value="KIUTGG"/>
</dbReference>
<dbReference type="PIR" id="S02235">
    <property type="entry name" value="TVUTGB"/>
</dbReference>
<dbReference type="PDB" id="13PK">
    <property type="method" value="X-ray"/>
    <property type="resolution" value="2.50 A"/>
    <property type="chains" value="A/B/C/D=5-417"/>
</dbReference>
<dbReference type="PDB" id="16PK">
    <property type="method" value="X-ray"/>
    <property type="resolution" value="1.60 A"/>
    <property type="chains" value="A=5-417"/>
</dbReference>
<dbReference type="PDBsum" id="13PK"/>
<dbReference type="PDBsum" id="16PK"/>
<dbReference type="SMR" id="P07378"/>
<dbReference type="ChEMBL" id="CHEMBL1741167"/>
<dbReference type="BRENDA" id="2.7.2.3">
    <property type="organism ID" value="6519"/>
</dbReference>
<dbReference type="SABIO-RK" id="P07378"/>
<dbReference type="UniPathway" id="UPA00109">
    <property type="reaction ID" value="UER00185"/>
</dbReference>
<dbReference type="EvolutionaryTrace" id="P07378"/>
<dbReference type="GO" id="GO:0005829">
    <property type="term" value="C:cytosol"/>
    <property type="evidence" value="ECO:0007669"/>
    <property type="project" value="TreeGrafter"/>
</dbReference>
<dbReference type="GO" id="GO:0020015">
    <property type="term" value="C:glycosome"/>
    <property type="evidence" value="ECO:0007669"/>
    <property type="project" value="UniProtKB-SubCell"/>
</dbReference>
<dbReference type="GO" id="GO:0043531">
    <property type="term" value="F:ADP binding"/>
    <property type="evidence" value="ECO:0007669"/>
    <property type="project" value="TreeGrafter"/>
</dbReference>
<dbReference type="GO" id="GO:0005524">
    <property type="term" value="F:ATP binding"/>
    <property type="evidence" value="ECO:0007669"/>
    <property type="project" value="UniProtKB-KW"/>
</dbReference>
<dbReference type="GO" id="GO:0046872">
    <property type="term" value="F:metal ion binding"/>
    <property type="evidence" value="ECO:0007669"/>
    <property type="project" value="UniProtKB-KW"/>
</dbReference>
<dbReference type="GO" id="GO:0004618">
    <property type="term" value="F:phosphoglycerate kinase activity"/>
    <property type="evidence" value="ECO:0007669"/>
    <property type="project" value="UniProtKB-EC"/>
</dbReference>
<dbReference type="GO" id="GO:0006094">
    <property type="term" value="P:gluconeogenesis"/>
    <property type="evidence" value="ECO:0007669"/>
    <property type="project" value="TreeGrafter"/>
</dbReference>
<dbReference type="GO" id="GO:0006096">
    <property type="term" value="P:glycolytic process"/>
    <property type="evidence" value="ECO:0007669"/>
    <property type="project" value="UniProtKB-UniPathway"/>
</dbReference>
<dbReference type="CDD" id="cd00318">
    <property type="entry name" value="Phosphoglycerate_kinase"/>
    <property type="match status" value="1"/>
</dbReference>
<dbReference type="FunFam" id="3.40.50.1260:FF:000007">
    <property type="entry name" value="Phosphoglycerate kinase"/>
    <property type="match status" value="1"/>
</dbReference>
<dbReference type="FunFam" id="3.40.50.1260:FF:000011">
    <property type="entry name" value="Phosphoglycerate kinase"/>
    <property type="match status" value="1"/>
</dbReference>
<dbReference type="Gene3D" id="3.40.50.1260">
    <property type="entry name" value="Phosphoglycerate kinase, N-terminal domain"/>
    <property type="match status" value="2"/>
</dbReference>
<dbReference type="HAMAP" id="MF_00145">
    <property type="entry name" value="Phosphoglyc_kinase"/>
    <property type="match status" value="1"/>
</dbReference>
<dbReference type="InterPro" id="IPR027250">
    <property type="entry name" value="Pgk_euglenozoa"/>
</dbReference>
<dbReference type="InterPro" id="IPR001576">
    <property type="entry name" value="Phosphoglycerate_kinase"/>
</dbReference>
<dbReference type="InterPro" id="IPR015911">
    <property type="entry name" value="Phosphoglycerate_kinase_CS"/>
</dbReference>
<dbReference type="InterPro" id="IPR015824">
    <property type="entry name" value="Phosphoglycerate_kinase_N"/>
</dbReference>
<dbReference type="InterPro" id="IPR036043">
    <property type="entry name" value="Phosphoglycerate_kinase_sf"/>
</dbReference>
<dbReference type="PANTHER" id="PTHR11406">
    <property type="entry name" value="PHOSPHOGLYCERATE KINASE"/>
    <property type="match status" value="1"/>
</dbReference>
<dbReference type="PANTHER" id="PTHR11406:SF23">
    <property type="entry name" value="PHOSPHOGLYCERATE KINASE 1, CHLOROPLASTIC-RELATED"/>
    <property type="match status" value="1"/>
</dbReference>
<dbReference type="Pfam" id="PF00162">
    <property type="entry name" value="PGK"/>
    <property type="match status" value="1"/>
</dbReference>
<dbReference type="PIRSF" id="PIRSF000724">
    <property type="entry name" value="Pgk"/>
    <property type="match status" value="1"/>
</dbReference>
<dbReference type="PIRSF" id="PIRSF500126">
    <property type="entry name" value="Pgk_euglenozoa"/>
    <property type="match status" value="1"/>
</dbReference>
<dbReference type="PRINTS" id="PR00477">
    <property type="entry name" value="PHGLYCKINASE"/>
</dbReference>
<dbReference type="SUPFAM" id="SSF53748">
    <property type="entry name" value="Phosphoglycerate kinase"/>
    <property type="match status" value="1"/>
</dbReference>
<dbReference type="PROSITE" id="PS00111">
    <property type="entry name" value="PGLYCERATE_KINASE"/>
    <property type="match status" value="1"/>
</dbReference>
<keyword id="KW-0002">3D-structure</keyword>
<keyword id="KW-0067">ATP-binding</keyword>
<keyword id="KW-0324">Glycolysis</keyword>
<keyword id="KW-0327">Glycosome</keyword>
<keyword id="KW-0418">Kinase</keyword>
<keyword id="KW-0460">Magnesium</keyword>
<keyword id="KW-0479">Metal-binding</keyword>
<keyword id="KW-0547">Nucleotide-binding</keyword>
<keyword id="KW-0576">Peroxisome</keyword>
<keyword id="KW-0808">Transferase</keyword>
<comment type="catalytic activity">
    <reaction evidence="1">
        <text>(2R)-3-phosphoglycerate + ATP = (2R)-3-phospho-glyceroyl phosphate + ADP</text>
        <dbReference type="Rhea" id="RHEA:14801"/>
        <dbReference type="ChEBI" id="CHEBI:30616"/>
        <dbReference type="ChEBI" id="CHEBI:57604"/>
        <dbReference type="ChEBI" id="CHEBI:58272"/>
        <dbReference type="ChEBI" id="CHEBI:456216"/>
        <dbReference type="EC" id="2.7.2.3"/>
    </reaction>
</comment>
<comment type="cofactor">
    <cofactor evidence="3">
        <name>Mg(2+)</name>
        <dbReference type="ChEBI" id="CHEBI:18420"/>
    </cofactor>
</comment>
<comment type="pathway">
    <text>Carbohydrate degradation; glycolysis; pyruvate from D-glyceraldehyde 3-phosphate: step 2/5.</text>
</comment>
<comment type="subunit">
    <text evidence="4">Monomer.</text>
</comment>
<comment type="subcellular location">
    <subcellularLocation>
        <location>Glycosome</location>
    </subcellularLocation>
</comment>
<comment type="miscellaneous">
    <text>In T.brucei, three genes code for phosphoglycerate kinase isozymes, which are transported to different cell compartments.</text>
</comment>
<comment type="similarity">
    <text evidence="5">Belongs to the phosphoglycerate kinase family.</text>
</comment>